<organism>
    <name type="scientific">Yersinia enterocolitica serotype O:8 / biotype 1B (strain NCTC 13174 / 8081)</name>
    <dbReference type="NCBI Taxonomy" id="393305"/>
    <lineage>
        <taxon>Bacteria</taxon>
        <taxon>Pseudomonadati</taxon>
        <taxon>Pseudomonadota</taxon>
        <taxon>Gammaproteobacteria</taxon>
        <taxon>Enterobacterales</taxon>
        <taxon>Yersiniaceae</taxon>
        <taxon>Yersinia</taxon>
    </lineage>
</organism>
<gene>
    <name evidence="1" type="primary">smrB</name>
    <name type="ordered locus">YE1279</name>
</gene>
<keyword id="KW-0255">Endonuclease</keyword>
<keyword id="KW-0378">Hydrolase</keyword>
<keyword id="KW-0540">Nuclease</keyword>
<keyword id="KW-0694">RNA-binding</keyword>
<keyword id="KW-0699">rRNA-binding</keyword>
<name>SMRB_YERE8</name>
<dbReference type="EC" id="3.1.-.-" evidence="1"/>
<dbReference type="EMBL" id="AM286415">
    <property type="protein sequence ID" value="CAL11371.1"/>
    <property type="molecule type" value="Genomic_DNA"/>
</dbReference>
<dbReference type="RefSeq" id="WP_005171938.1">
    <property type="nucleotide sequence ID" value="NC_008800.1"/>
</dbReference>
<dbReference type="RefSeq" id="YP_001005600.1">
    <property type="nucleotide sequence ID" value="NC_008800.1"/>
</dbReference>
<dbReference type="SMR" id="A1JK38"/>
<dbReference type="KEGG" id="yen:YE1279"/>
<dbReference type="PATRIC" id="fig|393305.7.peg.1389"/>
<dbReference type="eggNOG" id="COG2840">
    <property type="taxonomic scope" value="Bacteria"/>
</dbReference>
<dbReference type="HOGENOM" id="CLU_055978_4_0_6"/>
<dbReference type="OrthoDB" id="5795446at2"/>
<dbReference type="Proteomes" id="UP000000642">
    <property type="component" value="Chromosome"/>
</dbReference>
<dbReference type="GO" id="GO:0004521">
    <property type="term" value="F:RNA endonuclease activity"/>
    <property type="evidence" value="ECO:0007669"/>
    <property type="project" value="UniProtKB-UniRule"/>
</dbReference>
<dbReference type="GO" id="GO:0019843">
    <property type="term" value="F:rRNA binding"/>
    <property type="evidence" value="ECO:0007669"/>
    <property type="project" value="UniProtKB-UniRule"/>
</dbReference>
<dbReference type="GO" id="GO:0072344">
    <property type="term" value="P:rescue of stalled ribosome"/>
    <property type="evidence" value="ECO:0007669"/>
    <property type="project" value="UniProtKB-UniRule"/>
</dbReference>
<dbReference type="Gene3D" id="3.30.1370.110">
    <property type="match status" value="1"/>
</dbReference>
<dbReference type="HAMAP" id="MF_01042">
    <property type="entry name" value="SmrB"/>
    <property type="match status" value="1"/>
</dbReference>
<dbReference type="InterPro" id="IPR002625">
    <property type="entry name" value="Smr_dom"/>
</dbReference>
<dbReference type="InterPro" id="IPR036063">
    <property type="entry name" value="Smr_dom_sf"/>
</dbReference>
<dbReference type="InterPro" id="IPR022990">
    <property type="entry name" value="SmrB-like"/>
</dbReference>
<dbReference type="NCBIfam" id="NF003432">
    <property type="entry name" value="PRK04946.1"/>
    <property type="match status" value="1"/>
</dbReference>
<dbReference type="PANTHER" id="PTHR35562">
    <property type="entry name" value="DNA ENDONUCLEASE SMRA-RELATED"/>
    <property type="match status" value="1"/>
</dbReference>
<dbReference type="PANTHER" id="PTHR35562:SF1">
    <property type="entry name" value="UPF0115 PROTEIN YFCN"/>
    <property type="match status" value="1"/>
</dbReference>
<dbReference type="Pfam" id="PF01713">
    <property type="entry name" value="Smr"/>
    <property type="match status" value="1"/>
</dbReference>
<dbReference type="SMART" id="SM00463">
    <property type="entry name" value="SMR"/>
    <property type="match status" value="1"/>
</dbReference>
<dbReference type="SUPFAM" id="SSF160443">
    <property type="entry name" value="SMR domain-like"/>
    <property type="match status" value="1"/>
</dbReference>
<dbReference type="PROSITE" id="PS50828">
    <property type="entry name" value="SMR"/>
    <property type="match status" value="1"/>
</dbReference>
<sequence length="176" mass="20052">MKNKYHLTTDELQLFKESIAGAKKLKQDTIVHRSPPKLGKKIAPERLLQEQVDASYYFSDEFQPQLDTEGPTRYVRPGVDHFEVKKLRRGDYSPDMFLDLHGLTQKQAKQELGALIAACKREHVHCACVMHGHGKHVLKQQTPLWLAQHPDVLAFHQAPKEWGGTAALLVLVELEQ</sequence>
<comment type="function">
    <text evidence="1">Acts as a ribosome collision sensor. Detects stalled/collided disomes (pairs of ribosomes where the leading ribosome is stalled and a second ribosome has collided with it) and endonucleolytically cleaves mRNA at the 5' boundary of the stalled ribosome. Stalled/collided disomes form a new interface (primarily via the 30S subunits) that binds SmrB. Cleaved mRNA becomes available for tmRNA ligation, leading to ribosomal subunit dissociation and rescue of stalled ribosomes.</text>
</comment>
<comment type="subunit">
    <text evidence="1">Associates with collided ribosomes, but not with correctly translating polysomes.</text>
</comment>
<comment type="similarity">
    <text evidence="1">Belongs to the SmrB family.</text>
</comment>
<reference key="1">
    <citation type="journal article" date="2006" name="PLoS Genet.">
        <title>The complete genome sequence and comparative genome analysis of the high pathogenicity Yersinia enterocolitica strain 8081.</title>
        <authorList>
            <person name="Thomson N.R."/>
            <person name="Howard S."/>
            <person name="Wren B.W."/>
            <person name="Holden M.T.G."/>
            <person name="Crossman L."/>
            <person name="Challis G.L."/>
            <person name="Churcher C."/>
            <person name="Mungall K."/>
            <person name="Brooks K."/>
            <person name="Chillingworth T."/>
            <person name="Feltwell T."/>
            <person name="Abdellah Z."/>
            <person name="Hauser H."/>
            <person name="Jagels K."/>
            <person name="Maddison M."/>
            <person name="Moule S."/>
            <person name="Sanders M."/>
            <person name="Whitehead S."/>
            <person name="Quail M.A."/>
            <person name="Dougan G."/>
            <person name="Parkhill J."/>
            <person name="Prentice M.B."/>
        </authorList>
    </citation>
    <scope>NUCLEOTIDE SEQUENCE [LARGE SCALE GENOMIC DNA]</scope>
    <source>
        <strain>NCTC 13174 / 8081</strain>
    </source>
</reference>
<evidence type="ECO:0000255" key="1">
    <source>
        <dbReference type="HAMAP-Rule" id="MF_01042"/>
    </source>
</evidence>
<protein>
    <recommendedName>
        <fullName evidence="1">Ribosome rescue factor SmrB</fullName>
        <ecNumber evidence="1">3.1.-.-</ecNumber>
    </recommendedName>
</protein>
<proteinExistence type="inferred from homology"/>
<accession>A1JK38</accession>
<feature type="chain" id="PRO_1000084371" description="Ribosome rescue factor SmrB">
    <location>
        <begin position="1"/>
        <end position="176"/>
    </location>
</feature>
<feature type="domain" description="Smr" evidence="1">
    <location>
        <begin position="98"/>
        <end position="173"/>
    </location>
</feature>